<gene>
    <name evidence="1" type="primary">serS</name>
    <name type="ordered locus">UNCMA_29570</name>
    <name type="ORF">LRC224</name>
</gene>
<proteinExistence type="inferred from homology"/>
<evidence type="ECO:0000255" key="1">
    <source>
        <dbReference type="HAMAP-Rule" id="MF_00176"/>
    </source>
</evidence>
<reference key="1">
    <citation type="journal article" date="2006" name="Science">
        <title>Genome of rice cluster I archaea -- the key methane producers in the rice rhizosphere.</title>
        <authorList>
            <person name="Erkel C."/>
            <person name="Kube M."/>
            <person name="Reinhardt R."/>
            <person name="Liesack W."/>
        </authorList>
    </citation>
    <scope>NUCLEOTIDE SEQUENCE [LARGE SCALE GENOMIC DNA]</scope>
    <source>
        <strain>DSM 22066 / NBRC 105507 / MRE50</strain>
    </source>
</reference>
<comment type="function">
    <text evidence="1">Catalyzes the attachment of serine to tRNA(Ser). Is also able to aminoacylate tRNA(Sec) with serine, to form the misacylated tRNA L-seryl-tRNA(Sec), which will be further converted into selenocysteinyl-tRNA(Sec).</text>
</comment>
<comment type="catalytic activity">
    <reaction evidence="1">
        <text>tRNA(Ser) + L-serine + ATP = L-seryl-tRNA(Ser) + AMP + diphosphate + H(+)</text>
        <dbReference type="Rhea" id="RHEA:12292"/>
        <dbReference type="Rhea" id="RHEA-COMP:9669"/>
        <dbReference type="Rhea" id="RHEA-COMP:9703"/>
        <dbReference type="ChEBI" id="CHEBI:15378"/>
        <dbReference type="ChEBI" id="CHEBI:30616"/>
        <dbReference type="ChEBI" id="CHEBI:33019"/>
        <dbReference type="ChEBI" id="CHEBI:33384"/>
        <dbReference type="ChEBI" id="CHEBI:78442"/>
        <dbReference type="ChEBI" id="CHEBI:78533"/>
        <dbReference type="ChEBI" id="CHEBI:456215"/>
        <dbReference type="EC" id="6.1.1.11"/>
    </reaction>
</comment>
<comment type="catalytic activity">
    <reaction evidence="1">
        <text>tRNA(Sec) + L-serine + ATP = L-seryl-tRNA(Sec) + AMP + diphosphate + H(+)</text>
        <dbReference type="Rhea" id="RHEA:42580"/>
        <dbReference type="Rhea" id="RHEA-COMP:9742"/>
        <dbReference type="Rhea" id="RHEA-COMP:10128"/>
        <dbReference type="ChEBI" id="CHEBI:15378"/>
        <dbReference type="ChEBI" id="CHEBI:30616"/>
        <dbReference type="ChEBI" id="CHEBI:33019"/>
        <dbReference type="ChEBI" id="CHEBI:33384"/>
        <dbReference type="ChEBI" id="CHEBI:78442"/>
        <dbReference type="ChEBI" id="CHEBI:78533"/>
        <dbReference type="ChEBI" id="CHEBI:456215"/>
        <dbReference type="EC" id="6.1.1.11"/>
    </reaction>
</comment>
<comment type="pathway">
    <text evidence="1">Aminoacyl-tRNA biosynthesis; selenocysteinyl-tRNA(Sec) biosynthesis; L-seryl-tRNA(Sec) from L-serine and tRNA(Sec): step 1/1.</text>
</comment>
<comment type="subunit">
    <text evidence="1">Homodimer. The tRNA molecule binds across the dimer.</text>
</comment>
<comment type="subcellular location">
    <subcellularLocation>
        <location evidence="1">Cytoplasm</location>
    </subcellularLocation>
</comment>
<comment type="domain">
    <text evidence="1">Consists of two distinct domains, a catalytic core and a N-terminal extension that is involved in tRNA binding.</text>
</comment>
<comment type="similarity">
    <text evidence="1">Belongs to the class-II aminoacyl-tRNA synthetase family. Type-1 seryl-tRNA synthetase subfamily.</text>
</comment>
<feature type="chain" id="PRO_1000019862" description="Serine--tRNA ligase">
    <location>
        <begin position="1"/>
        <end position="425"/>
    </location>
</feature>
<feature type="binding site" evidence="1">
    <location>
        <begin position="232"/>
        <end position="234"/>
    </location>
    <ligand>
        <name>L-serine</name>
        <dbReference type="ChEBI" id="CHEBI:33384"/>
    </ligand>
</feature>
<feature type="binding site" evidence="1">
    <location>
        <begin position="263"/>
        <end position="265"/>
    </location>
    <ligand>
        <name>ATP</name>
        <dbReference type="ChEBI" id="CHEBI:30616"/>
    </ligand>
</feature>
<feature type="binding site" evidence="1">
    <location>
        <position position="279"/>
    </location>
    <ligand>
        <name>ATP</name>
        <dbReference type="ChEBI" id="CHEBI:30616"/>
    </ligand>
</feature>
<feature type="binding site" evidence="1">
    <location>
        <position position="286"/>
    </location>
    <ligand>
        <name>L-serine</name>
        <dbReference type="ChEBI" id="CHEBI:33384"/>
    </ligand>
</feature>
<feature type="binding site" evidence="1">
    <location>
        <begin position="350"/>
        <end position="353"/>
    </location>
    <ligand>
        <name>ATP</name>
        <dbReference type="ChEBI" id="CHEBI:30616"/>
    </ligand>
</feature>
<feature type="binding site" evidence="1">
    <location>
        <position position="387"/>
    </location>
    <ligand>
        <name>L-serine</name>
        <dbReference type="ChEBI" id="CHEBI:33384"/>
    </ligand>
</feature>
<accession>Q0W8S5</accession>
<protein>
    <recommendedName>
        <fullName evidence="1">Serine--tRNA ligase</fullName>
        <ecNumber evidence="1">6.1.1.11</ecNumber>
    </recommendedName>
    <alternativeName>
        <fullName evidence="1">Seryl-tRNA synthetase</fullName>
        <shortName evidence="1">SerRS</shortName>
    </alternativeName>
    <alternativeName>
        <fullName evidence="1">Seryl-tRNA(Ser/Sec) synthetase</fullName>
    </alternativeName>
</protein>
<sequence>MLDIRFVRESPDVVRADLRKRNDLEKLAWVDDLLAKDSQARAMQVKVDELRRRRNEISREINEARKAGKDTSALMAEARDIPRQIKEAETEMEESRNKVHYYLMRLPNILDDSVPVGKDDTENVEVKRWGEPVQKDFEIKNHGLLAVEHGWADFERAAKVAGAGFYFLKGNMVLLDMALQRFAMDLLVKRGFTPVTPPYMMNRKSYEGVTDLADFEKVMYKIEGDDMYLIATSEHPIGAMYQGEIFEEKDLPLRLAGISPCFRREIGAHGLDTKGLFRVHQFHKIEQFVFCKPEDSWKIHEEILANAEAVFQQLGLPYHVVNICTGDIGTVAAKKYDIEVWMPRENTYKEVVSCSNCTAYQATRLNIKVRDPKDFESKRYVHTLNSTAIATSRAMRAILENNQQKDGSVLIPEVLRPYMNGLEYL</sequence>
<organism>
    <name type="scientific">Methanocella arvoryzae (strain DSM 22066 / NBRC 105507 / MRE50)</name>
    <dbReference type="NCBI Taxonomy" id="351160"/>
    <lineage>
        <taxon>Archaea</taxon>
        <taxon>Methanobacteriati</taxon>
        <taxon>Methanobacteriota</taxon>
        <taxon>Stenosarchaea group</taxon>
        <taxon>Methanomicrobia</taxon>
        <taxon>Methanocellales</taxon>
        <taxon>Methanocellaceae</taxon>
        <taxon>Methanocella</taxon>
    </lineage>
</organism>
<name>SYS_METAR</name>
<keyword id="KW-0030">Aminoacyl-tRNA synthetase</keyword>
<keyword id="KW-0067">ATP-binding</keyword>
<keyword id="KW-0963">Cytoplasm</keyword>
<keyword id="KW-0436">Ligase</keyword>
<keyword id="KW-0547">Nucleotide-binding</keyword>
<keyword id="KW-0648">Protein biosynthesis</keyword>
<keyword id="KW-1185">Reference proteome</keyword>
<dbReference type="EC" id="6.1.1.11" evidence="1"/>
<dbReference type="EMBL" id="AM114193">
    <property type="protein sequence ID" value="CAJ35218.1"/>
    <property type="molecule type" value="Genomic_DNA"/>
</dbReference>
<dbReference type="RefSeq" id="WP_012037272.1">
    <property type="nucleotide sequence ID" value="NC_009464.1"/>
</dbReference>
<dbReference type="SMR" id="Q0W8S5"/>
<dbReference type="STRING" id="351160.LRC224"/>
<dbReference type="GeneID" id="5142864"/>
<dbReference type="KEGG" id="rci:LRC224"/>
<dbReference type="PATRIC" id="fig|351160.9.peg.3037"/>
<dbReference type="eggNOG" id="arCOG00403">
    <property type="taxonomic scope" value="Archaea"/>
</dbReference>
<dbReference type="OrthoDB" id="35932at2157"/>
<dbReference type="UniPathway" id="UPA00906">
    <property type="reaction ID" value="UER00895"/>
</dbReference>
<dbReference type="Proteomes" id="UP000000663">
    <property type="component" value="Chromosome"/>
</dbReference>
<dbReference type="GO" id="GO:0005737">
    <property type="term" value="C:cytoplasm"/>
    <property type="evidence" value="ECO:0007669"/>
    <property type="project" value="UniProtKB-SubCell"/>
</dbReference>
<dbReference type="GO" id="GO:0005524">
    <property type="term" value="F:ATP binding"/>
    <property type="evidence" value="ECO:0007669"/>
    <property type="project" value="UniProtKB-UniRule"/>
</dbReference>
<dbReference type="GO" id="GO:0004828">
    <property type="term" value="F:serine-tRNA ligase activity"/>
    <property type="evidence" value="ECO:0007669"/>
    <property type="project" value="UniProtKB-UniRule"/>
</dbReference>
<dbReference type="GO" id="GO:0016260">
    <property type="term" value="P:selenocysteine biosynthetic process"/>
    <property type="evidence" value="ECO:0007669"/>
    <property type="project" value="UniProtKB-UniRule"/>
</dbReference>
<dbReference type="GO" id="GO:0006434">
    <property type="term" value="P:seryl-tRNA aminoacylation"/>
    <property type="evidence" value="ECO:0007669"/>
    <property type="project" value="UniProtKB-UniRule"/>
</dbReference>
<dbReference type="CDD" id="cd00770">
    <property type="entry name" value="SerRS_core"/>
    <property type="match status" value="1"/>
</dbReference>
<dbReference type="Gene3D" id="3.30.930.10">
    <property type="entry name" value="Bira Bifunctional Protein, Domain 2"/>
    <property type="match status" value="1"/>
</dbReference>
<dbReference type="Gene3D" id="1.10.287.40">
    <property type="entry name" value="Serine-tRNA synthetase, tRNA binding domain"/>
    <property type="match status" value="1"/>
</dbReference>
<dbReference type="HAMAP" id="MF_00176">
    <property type="entry name" value="Ser_tRNA_synth_type1"/>
    <property type="match status" value="1"/>
</dbReference>
<dbReference type="InterPro" id="IPR002314">
    <property type="entry name" value="aa-tRNA-synt_IIb"/>
</dbReference>
<dbReference type="InterPro" id="IPR006195">
    <property type="entry name" value="aa-tRNA-synth_II"/>
</dbReference>
<dbReference type="InterPro" id="IPR045864">
    <property type="entry name" value="aa-tRNA-synth_II/BPL/LPL"/>
</dbReference>
<dbReference type="InterPro" id="IPR002317">
    <property type="entry name" value="Ser-tRNA-ligase_type_1"/>
</dbReference>
<dbReference type="InterPro" id="IPR015866">
    <property type="entry name" value="Ser-tRNA-synth_1_N"/>
</dbReference>
<dbReference type="InterPro" id="IPR042103">
    <property type="entry name" value="SerRS_1_N_sf"/>
</dbReference>
<dbReference type="InterPro" id="IPR033729">
    <property type="entry name" value="SerRS_core"/>
</dbReference>
<dbReference type="InterPro" id="IPR010978">
    <property type="entry name" value="tRNA-bd_arm"/>
</dbReference>
<dbReference type="NCBIfam" id="TIGR00414">
    <property type="entry name" value="serS"/>
    <property type="match status" value="1"/>
</dbReference>
<dbReference type="PANTHER" id="PTHR11778">
    <property type="entry name" value="SERYL-TRNA SYNTHETASE"/>
    <property type="match status" value="1"/>
</dbReference>
<dbReference type="Pfam" id="PF02403">
    <property type="entry name" value="Seryl_tRNA_N"/>
    <property type="match status" value="1"/>
</dbReference>
<dbReference type="Pfam" id="PF00587">
    <property type="entry name" value="tRNA-synt_2b"/>
    <property type="match status" value="1"/>
</dbReference>
<dbReference type="PIRSF" id="PIRSF001529">
    <property type="entry name" value="Ser-tRNA-synth_IIa"/>
    <property type="match status" value="1"/>
</dbReference>
<dbReference type="PRINTS" id="PR00981">
    <property type="entry name" value="TRNASYNTHSER"/>
</dbReference>
<dbReference type="SUPFAM" id="SSF55681">
    <property type="entry name" value="Class II aaRS and biotin synthetases"/>
    <property type="match status" value="1"/>
</dbReference>
<dbReference type="SUPFAM" id="SSF46589">
    <property type="entry name" value="tRNA-binding arm"/>
    <property type="match status" value="1"/>
</dbReference>
<dbReference type="PROSITE" id="PS50862">
    <property type="entry name" value="AA_TRNA_LIGASE_II"/>
    <property type="match status" value="1"/>
</dbReference>